<reference key="1">
    <citation type="journal article" date="2005" name="Genome Res.">
        <title>Living with two extremes: conclusions from the genome sequence of Natronomonas pharaonis.</title>
        <authorList>
            <person name="Falb M."/>
            <person name="Pfeiffer F."/>
            <person name="Palm P."/>
            <person name="Rodewald K."/>
            <person name="Hickmann V."/>
            <person name="Tittor J."/>
            <person name="Oesterhelt D."/>
        </authorList>
    </citation>
    <scope>NUCLEOTIDE SEQUENCE [LARGE SCALE GENOMIC DNA]</scope>
    <source>
        <strain>ATCC 35678 / DSM 2160 / CIP 103997 / JCM 8858 / NBRC 14720 / NCIMB 2260 / Gabara</strain>
    </source>
</reference>
<sequence length="409" mass="43939">MTQKHRQPEVNIGLVGHVDHGKTTLVESLSGEWTDQHSEEMKRGISIRLGYADATFRECPELDEPDRYTVEETCPDGSESEHLRTVSFVDAPGHETLMATMLSGAAIMDGAVLVIAANEPVPRAQTEEHLMALDIIGIDNIVIAQNKIDLVDREQALDNYEAIEEFVDGTVAEDAPVVPISAQQDVNMDLLMQTIESEIPTPDRDPDADARLQVARSFDINRPGTTWEDLTGGVLGGSLTQGQLEADDDIEIKPGREIEEGGQSEYQPVETTVRSLQAGGEFVDTVTPGGLLGVGTGLDPSLTKGDALAGQVAGPPGSLPPTRESFTMDVELLDRVVGEDAEEIEPISTGEPLMLTVGTATTVGSVTSARDDECEVQLKRPVCAPDGSKIAINRRVGARWRLIGVGTLR</sequence>
<dbReference type="EC" id="3.6.5.3" evidence="1"/>
<dbReference type="EMBL" id="CR936257">
    <property type="protein sequence ID" value="CAI50633.1"/>
    <property type="molecule type" value="Genomic_DNA"/>
</dbReference>
<dbReference type="RefSeq" id="WP_011324243.1">
    <property type="nucleotide sequence ID" value="NC_007426.1"/>
</dbReference>
<dbReference type="SMR" id="Q3IMM5"/>
<dbReference type="STRING" id="348780.NP_5084A"/>
<dbReference type="EnsemblBacteria" id="CAI50633">
    <property type="protein sequence ID" value="CAI50633"/>
    <property type="gene ID" value="NP_5084A"/>
</dbReference>
<dbReference type="GeneID" id="3703269"/>
<dbReference type="KEGG" id="nph:NP_5084A"/>
<dbReference type="eggNOG" id="arCOG01563">
    <property type="taxonomic scope" value="Archaea"/>
</dbReference>
<dbReference type="HOGENOM" id="CLU_027154_0_1_2"/>
<dbReference type="OrthoDB" id="7798at2157"/>
<dbReference type="Proteomes" id="UP000002698">
    <property type="component" value="Chromosome"/>
</dbReference>
<dbReference type="GO" id="GO:0005829">
    <property type="term" value="C:cytosol"/>
    <property type="evidence" value="ECO:0007669"/>
    <property type="project" value="TreeGrafter"/>
</dbReference>
<dbReference type="GO" id="GO:0005525">
    <property type="term" value="F:GTP binding"/>
    <property type="evidence" value="ECO:0007669"/>
    <property type="project" value="UniProtKB-UniRule"/>
</dbReference>
<dbReference type="GO" id="GO:0003924">
    <property type="term" value="F:GTPase activity"/>
    <property type="evidence" value="ECO:0007669"/>
    <property type="project" value="InterPro"/>
</dbReference>
<dbReference type="GO" id="GO:0046872">
    <property type="term" value="F:metal ion binding"/>
    <property type="evidence" value="ECO:0007669"/>
    <property type="project" value="UniProtKB-KW"/>
</dbReference>
<dbReference type="GO" id="GO:0003746">
    <property type="term" value="F:translation elongation factor activity"/>
    <property type="evidence" value="ECO:0007669"/>
    <property type="project" value="UniProtKB-UniRule"/>
</dbReference>
<dbReference type="GO" id="GO:0003743">
    <property type="term" value="F:translation initiation factor activity"/>
    <property type="evidence" value="ECO:0007669"/>
    <property type="project" value="UniProtKB-KW"/>
</dbReference>
<dbReference type="GO" id="GO:0000049">
    <property type="term" value="F:tRNA binding"/>
    <property type="evidence" value="ECO:0007669"/>
    <property type="project" value="InterPro"/>
</dbReference>
<dbReference type="GO" id="GO:0001731">
    <property type="term" value="P:formation of translation preinitiation complex"/>
    <property type="evidence" value="ECO:0007669"/>
    <property type="project" value="TreeGrafter"/>
</dbReference>
<dbReference type="CDD" id="cd01888">
    <property type="entry name" value="eIF2_gamma"/>
    <property type="match status" value="1"/>
</dbReference>
<dbReference type="CDD" id="cd03688">
    <property type="entry name" value="eIF2_gamma_II"/>
    <property type="match status" value="1"/>
</dbReference>
<dbReference type="CDD" id="cd15490">
    <property type="entry name" value="eIF2_gamma_III"/>
    <property type="match status" value="1"/>
</dbReference>
<dbReference type="FunFam" id="3.40.50.300:FF:000065">
    <property type="entry name" value="Eukaryotic translation initiation factor 2 subunit gamma"/>
    <property type="match status" value="1"/>
</dbReference>
<dbReference type="FunFam" id="2.40.30.10:FF:000075">
    <property type="entry name" value="Translation initiation factor 2 subunit gamma"/>
    <property type="match status" value="1"/>
</dbReference>
<dbReference type="Gene3D" id="3.40.50.300">
    <property type="entry name" value="P-loop containing nucleotide triphosphate hydrolases"/>
    <property type="match status" value="1"/>
</dbReference>
<dbReference type="Gene3D" id="2.40.30.10">
    <property type="entry name" value="Translation factors"/>
    <property type="match status" value="2"/>
</dbReference>
<dbReference type="HAMAP" id="MF_00119">
    <property type="entry name" value="eIF_2_gamma"/>
    <property type="match status" value="1"/>
</dbReference>
<dbReference type="InterPro" id="IPR050543">
    <property type="entry name" value="eIF2G"/>
</dbReference>
<dbReference type="InterPro" id="IPR015256">
    <property type="entry name" value="eIF2g_C"/>
</dbReference>
<dbReference type="InterPro" id="IPR044127">
    <property type="entry name" value="eIF2g_dom_2"/>
</dbReference>
<dbReference type="InterPro" id="IPR044128">
    <property type="entry name" value="eIF2g_GTP-bd"/>
</dbReference>
<dbReference type="InterPro" id="IPR027417">
    <property type="entry name" value="P-loop_NTPase"/>
</dbReference>
<dbReference type="InterPro" id="IPR005225">
    <property type="entry name" value="Small_GTP-bd"/>
</dbReference>
<dbReference type="InterPro" id="IPR000795">
    <property type="entry name" value="T_Tr_GTP-bd_dom"/>
</dbReference>
<dbReference type="InterPro" id="IPR022424">
    <property type="entry name" value="TIF2_gsu"/>
</dbReference>
<dbReference type="InterPro" id="IPR009000">
    <property type="entry name" value="Transl_B-barrel_sf"/>
</dbReference>
<dbReference type="InterPro" id="IPR009001">
    <property type="entry name" value="Transl_elong_EF1A/Init_IF2_C"/>
</dbReference>
<dbReference type="NCBIfam" id="TIGR03680">
    <property type="entry name" value="eif2g_arch"/>
    <property type="match status" value="1"/>
</dbReference>
<dbReference type="NCBIfam" id="NF003077">
    <property type="entry name" value="PRK04000.1"/>
    <property type="match status" value="1"/>
</dbReference>
<dbReference type="NCBIfam" id="TIGR00231">
    <property type="entry name" value="small_GTP"/>
    <property type="match status" value="1"/>
</dbReference>
<dbReference type="PANTHER" id="PTHR42854">
    <property type="entry name" value="EUKARYOTIC TRANSLATION INITIATION FACTOR 2 SUBUNIT 3 FAMILY MEMBER"/>
    <property type="match status" value="1"/>
</dbReference>
<dbReference type="PANTHER" id="PTHR42854:SF3">
    <property type="entry name" value="EUKARYOTIC TRANSLATION INITIATION FACTOR 2 SUBUNIT 3-RELATED"/>
    <property type="match status" value="1"/>
</dbReference>
<dbReference type="Pfam" id="PF09173">
    <property type="entry name" value="eIF2_C"/>
    <property type="match status" value="1"/>
</dbReference>
<dbReference type="Pfam" id="PF00009">
    <property type="entry name" value="GTP_EFTU"/>
    <property type="match status" value="1"/>
</dbReference>
<dbReference type="PRINTS" id="PR00315">
    <property type="entry name" value="ELONGATNFCT"/>
</dbReference>
<dbReference type="SUPFAM" id="SSF50465">
    <property type="entry name" value="EF-Tu/eEF-1alpha/eIF2-gamma C-terminal domain"/>
    <property type="match status" value="1"/>
</dbReference>
<dbReference type="SUPFAM" id="SSF52540">
    <property type="entry name" value="P-loop containing nucleoside triphosphate hydrolases"/>
    <property type="match status" value="1"/>
</dbReference>
<dbReference type="SUPFAM" id="SSF50447">
    <property type="entry name" value="Translation proteins"/>
    <property type="match status" value="1"/>
</dbReference>
<dbReference type="PROSITE" id="PS51722">
    <property type="entry name" value="G_TR_2"/>
    <property type="match status" value="1"/>
</dbReference>
<organism>
    <name type="scientific">Natronomonas pharaonis (strain ATCC 35678 / DSM 2160 / CIP 103997 / JCM 8858 / NBRC 14720 / NCIMB 2260 / Gabara)</name>
    <name type="common">Halobacterium pharaonis</name>
    <dbReference type="NCBI Taxonomy" id="348780"/>
    <lineage>
        <taxon>Archaea</taxon>
        <taxon>Methanobacteriati</taxon>
        <taxon>Methanobacteriota</taxon>
        <taxon>Stenosarchaea group</taxon>
        <taxon>Halobacteria</taxon>
        <taxon>Halobacteriales</taxon>
        <taxon>Haloarculaceae</taxon>
        <taxon>Natronomonas</taxon>
    </lineage>
</organism>
<feature type="chain" id="PRO_1000015792" description="Translation initiation factor 2 subunit gamma">
    <location>
        <begin position="1"/>
        <end position="409"/>
    </location>
</feature>
<feature type="domain" description="tr-type G" evidence="1">
    <location>
        <begin position="7"/>
        <end position="203"/>
    </location>
</feature>
<feature type="region of interest" description="G1" evidence="1">
    <location>
        <begin position="16"/>
        <end position="23"/>
    </location>
</feature>
<feature type="region of interest" description="G2" evidence="1">
    <location>
        <begin position="44"/>
        <end position="48"/>
    </location>
</feature>
<feature type="region of interest" description="G3" evidence="1">
    <location>
        <begin position="90"/>
        <end position="93"/>
    </location>
</feature>
<feature type="region of interest" description="G4" evidence="1">
    <location>
        <begin position="146"/>
        <end position="149"/>
    </location>
</feature>
<feature type="region of interest" description="G5" evidence="1">
    <location>
        <begin position="181"/>
        <end position="183"/>
    </location>
</feature>
<feature type="binding site" evidence="1">
    <location>
        <begin position="19"/>
        <end position="24"/>
    </location>
    <ligand>
        <name>GTP</name>
        <dbReference type="ChEBI" id="CHEBI:37565"/>
    </ligand>
</feature>
<feature type="binding site" evidence="1">
    <location>
        <position position="19"/>
    </location>
    <ligand>
        <name>Mg(2+)</name>
        <dbReference type="ChEBI" id="CHEBI:18420"/>
        <label>2</label>
    </ligand>
</feature>
<feature type="binding site" evidence="1">
    <location>
        <position position="23"/>
    </location>
    <ligand>
        <name>Mg(2+)</name>
        <dbReference type="ChEBI" id="CHEBI:18420"/>
        <label>1</label>
    </ligand>
</feature>
<feature type="binding site" evidence="1">
    <location>
        <position position="44"/>
    </location>
    <ligand>
        <name>Mg(2+)</name>
        <dbReference type="ChEBI" id="CHEBI:18420"/>
        <label>2</label>
    </ligand>
</feature>
<feature type="binding site" evidence="1">
    <location>
        <position position="46"/>
    </location>
    <ligand>
        <name>Mg(2+)</name>
        <dbReference type="ChEBI" id="CHEBI:18420"/>
        <label>1</label>
    </ligand>
</feature>
<feature type="binding site" evidence="1">
    <location>
        <begin position="146"/>
        <end position="149"/>
    </location>
    <ligand>
        <name>GTP</name>
        <dbReference type="ChEBI" id="CHEBI:37565"/>
    </ligand>
</feature>
<feature type="binding site" evidence="1">
    <location>
        <begin position="181"/>
        <end position="183"/>
    </location>
    <ligand>
        <name>GTP</name>
        <dbReference type="ChEBI" id="CHEBI:37565"/>
    </ligand>
</feature>
<protein>
    <recommendedName>
        <fullName evidence="1">Translation initiation factor 2 subunit gamma</fullName>
        <ecNumber evidence="1">3.6.5.3</ecNumber>
    </recommendedName>
    <alternativeName>
        <fullName evidence="1">aIF2-gamma</fullName>
    </alternativeName>
    <alternativeName>
        <fullName evidence="1">eIF-2-gamma</fullName>
    </alternativeName>
</protein>
<accession>Q3IMM5</accession>
<evidence type="ECO:0000255" key="1">
    <source>
        <dbReference type="HAMAP-Rule" id="MF_00119"/>
    </source>
</evidence>
<keyword id="KW-0342">GTP-binding</keyword>
<keyword id="KW-0378">Hydrolase</keyword>
<keyword id="KW-0396">Initiation factor</keyword>
<keyword id="KW-0460">Magnesium</keyword>
<keyword id="KW-0479">Metal-binding</keyword>
<keyword id="KW-0547">Nucleotide-binding</keyword>
<keyword id="KW-0648">Protein biosynthesis</keyword>
<keyword id="KW-1185">Reference proteome</keyword>
<name>IF2G_NATPD</name>
<comment type="function">
    <text evidence="1">eIF-2 functions in the early steps of protein synthesis by forming a ternary complex with GTP and initiator tRNA.</text>
</comment>
<comment type="catalytic activity">
    <reaction evidence="1">
        <text>GTP + H2O = GDP + phosphate + H(+)</text>
        <dbReference type="Rhea" id="RHEA:19669"/>
        <dbReference type="ChEBI" id="CHEBI:15377"/>
        <dbReference type="ChEBI" id="CHEBI:15378"/>
        <dbReference type="ChEBI" id="CHEBI:37565"/>
        <dbReference type="ChEBI" id="CHEBI:43474"/>
        <dbReference type="ChEBI" id="CHEBI:58189"/>
        <dbReference type="EC" id="3.6.5.3"/>
    </reaction>
</comment>
<comment type="cofactor">
    <cofactor evidence="1">
        <name>Mg(2+)</name>
        <dbReference type="ChEBI" id="CHEBI:18420"/>
    </cofactor>
</comment>
<comment type="subunit">
    <text evidence="1">Heterotrimer composed of an alpha, a beta and a gamma chain.</text>
</comment>
<comment type="similarity">
    <text evidence="1">Belongs to the TRAFAC class translation factor GTPase superfamily. Classic translation factor GTPase family. EIF2G subfamily.</text>
</comment>
<proteinExistence type="inferred from homology"/>
<gene>
    <name evidence="1" type="primary">eif2g</name>
    <name type="ordered locus">NP_5084A</name>
</gene>